<protein>
    <recommendedName>
        <fullName evidence="1">Esterase FrsA</fullName>
        <ecNumber evidence="1">3.1.1.1</ecNumber>
    </recommendedName>
</protein>
<proteinExistence type="inferred from homology"/>
<reference key="1">
    <citation type="submission" date="2008-02" db="EMBL/GenBank/DDBJ databases">
        <title>Complete sequence of Escherichia coli C str. ATCC 8739.</title>
        <authorList>
            <person name="Copeland A."/>
            <person name="Lucas S."/>
            <person name="Lapidus A."/>
            <person name="Glavina del Rio T."/>
            <person name="Dalin E."/>
            <person name="Tice H."/>
            <person name="Bruce D."/>
            <person name="Goodwin L."/>
            <person name="Pitluck S."/>
            <person name="Kiss H."/>
            <person name="Brettin T."/>
            <person name="Detter J.C."/>
            <person name="Han C."/>
            <person name="Kuske C.R."/>
            <person name="Schmutz J."/>
            <person name="Larimer F."/>
            <person name="Land M."/>
            <person name="Hauser L."/>
            <person name="Kyrpides N."/>
            <person name="Mikhailova N."/>
            <person name="Ingram L."/>
            <person name="Richardson P."/>
        </authorList>
    </citation>
    <scope>NUCLEOTIDE SEQUENCE [LARGE SCALE GENOMIC DNA]</scope>
    <source>
        <strain>ATCC 8739 / DSM 1576 / NBRC 3972 / NCIMB 8545 / WDCM 00012 / Crooks</strain>
    </source>
</reference>
<name>FRSA_ECOLC</name>
<organism>
    <name type="scientific">Escherichia coli (strain ATCC 8739 / DSM 1576 / NBRC 3972 / NCIMB 8545 / WDCM 00012 / Crooks)</name>
    <dbReference type="NCBI Taxonomy" id="481805"/>
    <lineage>
        <taxon>Bacteria</taxon>
        <taxon>Pseudomonadati</taxon>
        <taxon>Pseudomonadota</taxon>
        <taxon>Gammaproteobacteria</taxon>
        <taxon>Enterobacterales</taxon>
        <taxon>Enterobacteriaceae</taxon>
        <taxon>Escherichia</taxon>
    </lineage>
</organism>
<gene>
    <name evidence="1" type="primary">frsA</name>
    <name type="ordered locus">EcolC_3342</name>
</gene>
<keyword id="KW-0378">Hydrolase</keyword>
<keyword id="KW-0719">Serine esterase</keyword>
<sequence>MTQANLSETLFKPRFKHPETSTLVRRFNHGAQPPVQSALDGKTIPHWYRMINRLMWIWRGIDPREILDVQARIVMSDAERTDDDLYDTVIGYRGGNWIYEWATQAMVWQQKACAEEDPQLSGRHWLHAATLYNIAAYPHLKGDDLAEQAQALSNRAYEEAAQRLPGTMRQMEFTVPGGAPITGFLHMPKGDGPFPTVLMCGGLDAMQTDYYSLYERYFAPRGIAMLTIDMPSVGFSSKWKLTQDSSLLHQHVLKALPNVPWVDHTRVAAFGFRFGANVAVRLAYLESPRLKAVACLGPVVHTLLSDFKCQQQVPEMYLDVLASRLGMHDASDEALRVELNRYSLKVQGLLGRRCPTPMLSGYWKNDPFSPEEDSRLITSSSADGKLLEIPFNPVYRNFDKGLQEITDWIEKRLC</sequence>
<accession>B1J0Z5</accession>
<dbReference type="EC" id="3.1.1.1" evidence="1"/>
<dbReference type="EMBL" id="CP000946">
    <property type="protein sequence ID" value="ACA78963.1"/>
    <property type="molecule type" value="Genomic_DNA"/>
</dbReference>
<dbReference type="RefSeq" id="WP_000189541.1">
    <property type="nucleotide sequence ID" value="NZ_MTFT01000010.1"/>
</dbReference>
<dbReference type="SMR" id="B1J0Z5"/>
<dbReference type="ESTHER" id="ecoli-yafa">
    <property type="family name" value="Duf_1100-R"/>
</dbReference>
<dbReference type="GeneID" id="75170206"/>
<dbReference type="KEGG" id="ecl:EcolC_3342"/>
<dbReference type="HOGENOM" id="CLU_036819_0_0_6"/>
<dbReference type="GO" id="GO:0106435">
    <property type="term" value="F:carboxylesterase activity"/>
    <property type="evidence" value="ECO:0007669"/>
    <property type="project" value="UniProtKB-EC"/>
</dbReference>
<dbReference type="FunFam" id="3.40.50.1820:FF:000022">
    <property type="entry name" value="Esterase FrsA"/>
    <property type="match status" value="1"/>
</dbReference>
<dbReference type="Gene3D" id="3.40.50.1820">
    <property type="entry name" value="alpha/beta hydrolase"/>
    <property type="match status" value="1"/>
</dbReference>
<dbReference type="HAMAP" id="MF_01063">
    <property type="entry name" value="FrsA"/>
    <property type="match status" value="1"/>
</dbReference>
<dbReference type="InterPro" id="IPR029058">
    <property type="entry name" value="AB_hydrolase_fold"/>
</dbReference>
<dbReference type="InterPro" id="IPR043423">
    <property type="entry name" value="FrsA"/>
</dbReference>
<dbReference type="InterPro" id="IPR010520">
    <property type="entry name" value="FrsA-like"/>
</dbReference>
<dbReference type="InterPro" id="IPR050261">
    <property type="entry name" value="FrsA_esterase"/>
</dbReference>
<dbReference type="NCBIfam" id="NF003460">
    <property type="entry name" value="PRK05077.1"/>
    <property type="match status" value="1"/>
</dbReference>
<dbReference type="PANTHER" id="PTHR22946">
    <property type="entry name" value="DIENELACTONE HYDROLASE DOMAIN-CONTAINING PROTEIN-RELATED"/>
    <property type="match status" value="1"/>
</dbReference>
<dbReference type="PANTHER" id="PTHR22946:SF4">
    <property type="entry name" value="ESTERASE FRSA"/>
    <property type="match status" value="1"/>
</dbReference>
<dbReference type="Pfam" id="PF06500">
    <property type="entry name" value="FrsA-like"/>
    <property type="match status" value="1"/>
</dbReference>
<dbReference type="SUPFAM" id="SSF53474">
    <property type="entry name" value="alpha/beta-Hydrolases"/>
    <property type="match status" value="1"/>
</dbReference>
<feature type="chain" id="PRO_1000084481" description="Esterase FrsA">
    <location>
        <begin position="1"/>
        <end position="414"/>
    </location>
</feature>
<evidence type="ECO:0000255" key="1">
    <source>
        <dbReference type="HAMAP-Rule" id="MF_01063"/>
    </source>
</evidence>
<comment type="function">
    <text evidence="1">Catalyzes the hydrolysis of esters.</text>
</comment>
<comment type="catalytic activity">
    <reaction evidence="1">
        <text>a carboxylic ester + H2O = an alcohol + a carboxylate + H(+)</text>
        <dbReference type="Rhea" id="RHEA:21164"/>
        <dbReference type="ChEBI" id="CHEBI:15377"/>
        <dbReference type="ChEBI" id="CHEBI:15378"/>
        <dbReference type="ChEBI" id="CHEBI:29067"/>
        <dbReference type="ChEBI" id="CHEBI:30879"/>
        <dbReference type="ChEBI" id="CHEBI:33308"/>
        <dbReference type="EC" id="3.1.1.1"/>
    </reaction>
</comment>
<comment type="similarity">
    <text evidence="1">Belongs to the FrsA family.</text>
</comment>